<gene>
    <name evidence="1" type="primary">nhaA</name>
    <name type="ordered locus">PMI0011</name>
</gene>
<evidence type="ECO:0000255" key="1">
    <source>
        <dbReference type="HAMAP-Rule" id="MF_01844"/>
    </source>
</evidence>
<organism>
    <name type="scientific">Proteus mirabilis (strain HI4320)</name>
    <dbReference type="NCBI Taxonomy" id="529507"/>
    <lineage>
        <taxon>Bacteria</taxon>
        <taxon>Pseudomonadati</taxon>
        <taxon>Pseudomonadota</taxon>
        <taxon>Gammaproteobacteria</taxon>
        <taxon>Enterobacterales</taxon>
        <taxon>Morganellaceae</taxon>
        <taxon>Proteus</taxon>
    </lineage>
</organism>
<protein>
    <recommendedName>
        <fullName evidence="1">Na(+)/H(+) antiporter NhaA</fullName>
    </recommendedName>
    <alternativeName>
        <fullName evidence="1">Sodium/proton antiporter NhaA</fullName>
    </alternativeName>
</protein>
<dbReference type="EMBL" id="AM942759">
    <property type="protein sequence ID" value="CAR40251.1"/>
    <property type="molecule type" value="Genomic_DNA"/>
</dbReference>
<dbReference type="RefSeq" id="WP_004245211.1">
    <property type="nucleotide sequence ID" value="NC_010554.1"/>
</dbReference>
<dbReference type="SMR" id="B4F2T1"/>
<dbReference type="EnsemblBacteria" id="CAR40251">
    <property type="protein sequence ID" value="CAR40251"/>
    <property type="gene ID" value="PMI0011"/>
</dbReference>
<dbReference type="GeneID" id="6802162"/>
<dbReference type="KEGG" id="pmr:PMI0011"/>
<dbReference type="eggNOG" id="COG3004">
    <property type="taxonomic scope" value="Bacteria"/>
</dbReference>
<dbReference type="HOGENOM" id="CLU_015803_1_0_6"/>
<dbReference type="Proteomes" id="UP000008319">
    <property type="component" value="Chromosome"/>
</dbReference>
<dbReference type="GO" id="GO:0005886">
    <property type="term" value="C:plasma membrane"/>
    <property type="evidence" value="ECO:0007669"/>
    <property type="project" value="UniProtKB-SubCell"/>
</dbReference>
<dbReference type="GO" id="GO:0015385">
    <property type="term" value="F:sodium:proton antiporter activity"/>
    <property type="evidence" value="ECO:0007669"/>
    <property type="project" value="TreeGrafter"/>
</dbReference>
<dbReference type="GO" id="GO:0006885">
    <property type="term" value="P:regulation of pH"/>
    <property type="evidence" value="ECO:0007669"/>
    <property type="project" value="InterPro"/>
</dbReference>
<dbReference type="Gene3D" id="1.20.1530.10">
    <property type="entry name" value="Na+/H+ antiporter like domain"/>
    <property type="match status" value="1"/>
</dbReference>
<dbReference type="HAMAP" id="MF_01844">
    <property type="entry name" value="NhaA"/>
    <property type="match status" value="1"/>
</dbReference>
<dbReference type="InterPro" id="IPR023171">
    <property type="entry name" value="Na/H_antiporter_dom_sf"/>
</dbReference>
<dbReference type="InterPro" id="IPR004670">
    <property type="entry name" value="NhaA"/>
</dbReference>
<dbReference type="NCBIfam" id="TIGR00773">
    <property type="entry name" value="NhaA"/>
    <property type="match status" value="1"/>
</dbReference>
<dbReference type="NCBIfam" id="NF007111">
    <property type="entry name" value="PRK09560.1"/>
    <property type="match status" value="1"/>
</dbReference>
<dbReference type="NCBIfam" id="NF007112">
    <property type="entry name" value="PRK09561.1"/>
    <property type="match status" value="1"/>
</dbReference>
<dbReference type="PANTHER" id="PTHR30341:SF0">
    <property type="entry name" value="NA(+)_H(+) ANTIPORTER NHAA"/>
    <property type="match status" value="1"/>
</dbReference>
<dbReference type="PANTHER" id="PTHR30341">
    <property type="entry name" value="SODIUM ION/PROTON ANTIPORTER NHAA-RELATED"/>
    <property type="match status" value="1"/>
</dbReference>
<dbReference type="Pfam" id="PF06965">
    <property type="entry name" value="Na_H_antiport_1"/>
    <property type="match status" value="1"/>
</dbReference>
<accession>B4F2T1</accession>
<sequence length="392" mass="42050">MTAIIRQFLRLEASGGILLIVAAIIALIMANTPLSALYNEFLSIPIMIKFGALELDKPLILWVNDALMAIFFLVVGLEVKRELKEGSLAQRDRAIFPAIAAVGGMLAPALIYLFFNHGDAIGQQGWAIPAATDIAFALGVMALLGRRVPVELKVFLLALAIIDDLGVIVIIALFYSKSVALVPLLLAALITIMLFILNWRKVSNTAVYLVLGFILWVCILKSGIHATIAGVIVGFLIPLRDKEGASPSEELEHVLHPWVAYLILPLFAFSNAGVSLNGVTLDGMLSTLPVGIALGLFLGKPIGIFLFSWVSVKLGIAKLPDAINLKQIFAVSVLCGIGFTMSIFIAGLAFEGAIEAYNTYSKLGILVGSTMAAVVGYLLLNSVLPKLKQKQK</sequence>
<feature type="chain" id="PRO_1000188440" description="Na(+)/H(+) antiporter NhaA">
    <location>
        <begin position="1"/>
        <end position="392"/>
    </location>
</feature>
<feature type="transmembrane region" description="Helical" evidence="1">
    <location>
        <begin position="17"/>
        <end position="37"/>
    </location>
</feature>
<feature type="transmembrane region" description="Helical" evidence="1">
    <location>
        <begin position="59"/>
        <end position="79"/>
    </location>
</feature>
<feature type="transmembrane region" description="Helical" evidence="1">
    <location>
        <begin position="95"/>
        <end position="115"/>
    </location>
</feature>
<feature type="transmembrane region" description="Helical" evidence="1">
    <location>
        <begin position="125"/>
        <end position="145"/>
    </location>
</feature>
<feature type="transmembrane region" description="Helical" evidence="1">
    <location>
        <begin position="154"/>
        <end position="174"/>
    </location>
</feature>
<feature type="transmembrane region" description="Helical" evidence="1">
    <location>
        <begin position="179"/>
        <end position="199"/>
    </location>
</feature>
<feature type="transmembrane region" description="Helical" evidence="1">
    <location>
        <begin position="213"/>
        <end position="233"/>
    </location>
</feature>
<feature type="transmembrane region" description="Helical" evidence="1">
    <location>
        <begin position="254"/>
        <end position="274"/>
    </location>
</feature>
<feature type="transmembrane region" description="Helical" evidence="1">
    <location>
        <begin position="290"/>
        <end position="310"/>
    </location>
</feature>
<feature type="transmembrane region" description="Helical" evidence="1">
    <location>
        <begin position="328"/>
        <end position="348"/>
    </location>
</feature>
<feature type="transmembrane region" description="Helical" evidence="1">
    <location>
        <begin position="363"/>
        <end position="383"/>
    </location>
</feature>
<comment type="function">
    <text evidence="1">Na(+)/H(+) antiporter that extrudes sodium in exchange for external protons.</text>
</comment>
<comment type="catalytic activity">
    <reaction evidence="1">
        <text>Na(+)(in) + 2 H(+)(out) = Na(+)(out) + 2 H(+)(in)</text>
        <dbReference type="Rhea" id="RHEA:29251"/>
        <dbReference type="ChEBI" id="CHEBI:15378"/>
        <dbReference type="ChEBI" id="CHEBI:29101"/>
    </reaction>
    <physiologicalReaction direction="left-to-right" evidence="1">
        <dbReference type="Rhea" id="RHEA:29252"/>
    </physiologicalReaction>
</comment>
<comment type="subcellular location">
    <subcellularLocation>
        <location evidence="1">Cell inner membrane</location>
        <topology evidence="1">Multi-pass membrane protein</topology>
    </subcellularLocation>
</comment>
<comment type="similarity">
    <text evidence="1">Belongs to the NhaA Na(+)/H(+) (TC 2.A.33) antiporter family.</text>
</comment>
<reference key="1">
    <citation type="journal article" date="2008" name="J. Bacteriol.">
        <title>Complete genome sequence of uropathogenic Proteus mirabilis, a master of both adherence and motility.</title>
        <authorList>
            <person name="Pearson M.M."/>
            <person name="Sebaihia M."/>
            <person name="Churcher C."/>
            <person name="Quail M.A."/>
            <person name="Seshasayee A.S."/>
            <person name="Luscombe N.M."/>
            <person name="Abdellah Z."/>
            <person name="Arrosmith C."/>
            <person name="Atkin B."/>
            <person name="Chillingworth T."/>
            <person name="Hauser H."/>
            <person name="Jagels K."/>
            <person name="Moule S."/>
            <person name="Mungall K."/>
            <person name="Norbertczak H."/>
            <person name="Rabbinowitsch E."/>
            <person name="Walker D."/>
            <person name="Whithead S."/>
            <person name="Thomson N.R."/>
            <person name="Rather P.N."/>
            <person name="Parkhill J."/>
            <person name="Mobley H.L.T."/>
        </authorList>
    </citation>
    <scope>NUCLEOTIDE SEQUENCE [LARGE SCALE GENOMIC DNA]</scope>
    <source>
        <strain>HI4320</strain>
    </source>
</reference>
<keyword id="KW-0050">Antiport</keyword>
<keyword id="KW-0997">Cell inner membrane</keyword>
<keyword id="KW-1003">Cell membrane</keyword>
<keyword id="KW-0406">Ion transport</keyword>
<keyword id="KW-0472">Membrane</keyword>
<keyword id="KW-1185">Reference proteome</keyword>
<keyword id="KW-0915">Sodium</keyword>
<keyword id="KW-0739">Sodium transport</keyword>
<keyword id="KW-0812">Transmembrane</keyword>
<keyword id="KW-1133">Transmembrane helix</keyword>
<keyword id="KW-0813">Transport</keyword>
<name>NHAA_PROMH</name>
<proteinExistence type="inferred from homology"/>